<gene>
    <name evidence="1" type="primary">gpmA</name>
    <name type="ordered locus">Bind_0494</name>
</gene>
<accession>B2IEV6</accession>
<keyword id="KW-0312">Gluconeogenesis</keyword>
<keyword id="KW-0324">Glycolysis</keyword>
<keyword id="KW-0413">Isomerase</keyword>
<keyword id="KW-1185">Reference proteome</keyword>
<reference key="1">
    <citation type="journal article" date="2010" name="J. Bacteriol.">
        <title>Complete genome sequence of Beijerinckia indica subsp. indica.</title>
        <authorList>
            <person name="Tamas I."/>
            <person name="Dedysh S.N."/>
            <person name="Liesack W."/>
            <person name="Stott M.B."/>
            <person name="Alam M."/>
            <person name="Murrell J.C."/>
            <person name="Dunfield P.F."/>
        </authorList>
    </citation>
    <scope>NUCLEOTIDE SEQUENCE [LARGE SCALE GENOMIC DNA]</scope>
    <source>
        <strain>ATCC 9039 / DSM 1715 / NCIMB 8712</strain>
    </source>
</reference>
<name>GPMA_BEII9</name>
<comment type="function">
    <text evidence="1">Catalyzes the interconversion of 2-phosphoglycerate and 3-phosphoglycerate.</text>
</comment>
<comment type="catalytic activity">
    <reaction evidence="1">
        <text>(2R)-2-phosphoglycerate = (2R)-3-phosphoglycerate</text>
        <dbReference type="Rhea" id="RHEA:15901"/>
        <dbReference type="ChEBI" id="CHEBI:58272"/>
        <dbReference type="ChEBI" id="CHEBI:58289"/>
        <dbReference type="EC" id="5.4.2.11"/>
    </reaction>
</comment>
<comment type="pathway">
    <text evidence="1">Carbohydrate degradation; glycolysis; pyruvate from D-glyceraldehyde 3-phosphate: step 3/5.</text>
</comment>
<comment type="subunit">
    <text evidence="1">Homodimer.</text>
</comment>
<comment type="similarity">
    <text evidence="1">Belongs to the phosphoglycerate mutase family. BPG-dependent PGAM subfamily.</text>
</comment>
<organism>
    <name type="scientific">Beijerinckia indica subsp. indica (strain ATCC 9039 / DSM 1715 / NCIMB 8712)</name>
    <dbReference type="NCBI Taxonomy" id="395963"/>
    <lineage>
        <taxon>Bacteria</taxon>
        <taxon>Pseudomonadati</taxon>
        <taxon>Pseudomonadota</taxon>
        <taxon>Alphaproteobacteria</taxon>
        <taxon>Hyphomicrobiales</taxon>
        <taxon>Beijerinckiaceae</taxon>
        <taxon>Beijerinckia</taxon>
    </lineage>
</organism>
<feature type="chain" id="PRO_1000149502" description="2,3-bisphosphoglycerate-dependent phosphoglycerate mutase">
    <location>
        <begin position="1"/>
        <end position="207"/>
    </location>
</feature>
<feature type="active site" description="Tele-phosphohistidine intermediate" evidence="1">
    <location>
        <position position="10"/>
    </location>
</feature>
<feature type="active site" description="Proton donor/acceptor" evidence="1">
    <location>
        <position position="88"/>
    </location>
</feature>
<feature type="binding site" evidence="1">
    <location>
        <begin position="9"/>
        <end position="16"/>
    </location>
    <ligand>
        <name>substrate</name>
    </ligand>
</feature>
<feature type="binding site" evidence="1">
    <location>
        <begin position="22"/>
        <end position="23"/>
    </location>
    <ligand>
        <name>substrate</name>
    </ligand>
</feature>
<feature type="binding site" evidence="1">
    <location>
        <position position="61"/>
    </location>
    <ligand>
        <name>substrate</name>
    </ligand>
</feature>
<feature type="binding site" evidence="1">
    <location>
        <begin position="88"/>
        <end position="91"/>
    </location>
    <ligand>
        <name>substrate</name>
    </ligand>
</feature>
<feature type="binding site" evidence="1">
    <location>
        <position position="99"/>
    </location>
    <ligand>
        <name>substrate</name>
    </ligand>
</feature>
<feature type="binding site" evidence="1">
    <location>
        <begin position="115"/>
        <end position="116"/>
    </location>
    <ligand>
        <name>substrate</name>
    </ligand>
</feature>
<feature type="binding site" evidence="1">
    <location>
        <begin position="159"/>
        <end position="160"/>
    </location>
    <ligand>
        <name>substrate</name>
    </ligand>
</feature>
<feature type="site" description="Transition state stabilizer" evidence="1">
    <location>
        <position position="158"/>
    </location>
</feature>
<protein>
    <recommendedName>
        <fullName evidence="1">2,3-bisphosphoglycerate-dependent phosphoglycerate mutase</fullName>
        <shortName evidence="1">BPG-dependent PGAM</shortName>
        <shortName evidence="1">PGAM</shortName>
        <shortName evidence="1">Phosphoglyceromutase</shortName>
        <shortName evidence="1">dPGM</shortName>
        <ecNumber evidence="1">5.4.2.11</ecNumber>
    </recommendedName>
</protein>
<evidence type="ECO:0000255" key="1">
    <source>
        <dbReference type="HAMAP-Rule" id="MF_01039"/>
    </source>
</evidence>
<dbReference type="EC" id="5.4.2.11" evidence="1"/>
<dbReference type="EMBL" id="CP001016">
    <property type="protein sequence ID" value="ACB94147.1"/>
    <property type="molecule type" value="Genomic_DNA"/>
</dbReference>
<dbReference type="RefSeq" id="WP_012383505.1">
    <property type="nucleotide sequence ID" value="NC_010581.1"/>
</dbReference>
<dbReference type="SMR" id="B2IEV6"/>
<dbReference type="STRING" id="395963.Bind_0494"/>
<dbReference type="KEGG" id="bid:Bind_0494"/>
<dbReference type="eggNOG" id="COG0588">
    <property type="taxonomic scope" value="Bacteria"/>
</dbReference>
<dbReference type="HOGENOM" id="CLU_033323_1_4_5"/>
<dbReference type="OrthoDB" id="9781415at2"/>
<dbReference type="UniPathway" id="UPA00109">
    <property type="reaction ID" value="UER00186"/>
</dbReference>
<dbReference type="Proteomes" id="UP000001695">
    <property type="component" value="Chromosome"/>
</dbReference>
<dbReference type="GO" id="GO:0004619">
    <property type="term" value="F:phosphoglycerate mutase activity"/>
    <property type="evidence" value="ECO:0007669"/>
    <property type="project" value="UniProtKB-EC"/>
</dbReference>
<dbReference type="GO" id="GO:0006094">
    <property type="term" value="P:gluconeogenesis"/>
    <property type="evidence" value="ECO:0007669"/>
    <property type="project" value="UniProtKB-UniRule"/>
</dbReference>
<dbReference type="GO" id="GO:0006096">
    <property type="term" value="P:glycolytic process"/>
    <property type="evidence" value="ECO:0007669"/>
    <property type="project" value="UniProtKB-UniRule"/>
</dbReference>
<dbReference type="CDD" id="cd07067">
    <property type="entry name" value="HP_PGM_like"/>
    <property type="match status" value="1"/>
</dbReference>
<dbReference type="Gene3D" id="3.40.50.1240">
    <property type="entry name" value="Phosphoglycerate mutase-like"/>
    <property type="match status" value="1"/>
</dbReference>
<dbReference type="HAMAP" id="MF_01039">
    <property type="entry name" value="PGAM_GpmA"/>
    <property type="match status" value="1"/>
</dbReference>
<dbReference type="InterPro" id="IPR013078">
    <property type="entry name" value="His_Pase_superF_clade-1"/>
</dbReference>
<dbReference type="InterPro" id="IPR029033">
    <property type="entry name" value="His_PPase_superfam"/>
</dbReference>
<dbReference type="InterPro" id="IPR001345">
    <property type="entry name" value="PG/BPGM_mutase_AS"/>
</dbReference>
<dbReference type="InterPro" id="IPR005952">
    <property type="entry name" value="Phosphogly_mut1"/>
</dbReference>
<dbReference type="NCBIfam" id="TIGR01258">
    <property type="entry name" value="pgm_1"/>
    <property type="match status" value="1"/>
</dbReference>
<dbReference type="NCBIfam" id="NF002339">
    <property type="entry name" value="PRK01295.1"/>
    <property type="match status" value="1"/>
</dbReference>
<dbReference type="PANTHER" id="PTHR11931">
    <property type="entry name" value="PHOSPHOGLYCERATE MUTASE"/>
    <property type="match status" value="1"/>
</dbReference>
<dbReference type="Pfam" id="PF00300">
    <property type="entry name" value="His_Phos_1"/>
    <property type="match status" value="1"/>
</dbReference>
<dbReference type="SMART" id="SM00855">
    <property type="entry name" value="PGAM"/>
    <property type="match status" value="1"/>
</dbReference>
<dbReference type="SUPFAM" id="SSF53254">
    <property type="entry name" value="Phosphoglycerate mutase-like"/>
    <property type="match status" value="1"/>
</dbReference>
<dbReference type="PROSITE" id="PS00175">
    <property type="entry name" value="PG_MUTASE"/>
    <property type="match status" value="1"/>
</dbReference>
<proteinExistence type="inferred from homology"/>
<sequence>MDRLLVLVRHGQSDWNLKNLFTGWKDPDLTEKGIGEAQAAGRGLKAKGLAFDIAFTSALTRAQHTLKLILGELGTPDVPTTREQALNERDYGDLSGLNKDDARQKWGEEQVHVWRRSYDISPPGGESLKDTVARVLPYYCQSILPAVLDGKKTIVAAHGNSLRALVMVLDGLTPETIPSMELETGVPLIYRLRANSTVESKEVLKLG</sequence>